<proteinExistence type="evidence at protein level"/>
<protein>
    <recommendedName>
        <fullName>Probable transcriptional regulator WhiB7</fullName>
    </recommendedName>
</protein>
<reference key="1">
    <citation type="journal article" date="1998" name="Nature">
        <title>Deciphering the biology of Mycobacterium tuberculosis from the complete genome sequence.</title>
        <authorList>
            <person name="Cole S.T."/>
            <person name="Brosch R."/>
            <person name="Parkhill J."/>
            <person name="Garnier T."/>
            <person name="Churcher C.M."/>
            <person name="Harris D.E."/>
            <person name="Gordon S.V."/>
            <person name="Eiglmeier K."/>
            <person name="Gas S."/>
            <person name="Barry C.E. III"/>
            <person name="Tekaia F."/>
            <person name="Badcock K."/>
            <person name="Basham D."/>
            <person name="Brown D."/>
            <person name="Chillingworth T."/>
            <person name="Connor R."/>
            <person name="Davies R.M."/>
            <person name="Devlin K."/>
            <person name="Feltwell T."/>
            <person name="Gentles S."/>
            <person name="Hamlin N."/>
            <person name="Holroyd S."/>
            <person name="Hornsby T."/>
            <person name="Jagels K."/>
            <person name="Krogh A."/>
            <person name="McLean J."/>
            <person name="Moule S."/>
            <person name="Murphy L.D."/>
            <person name="Oliver S."/>
            <person name="Osborne J."/>
            <person name="Quail M.A."/>
            <person name="Rajandream M.A."/>
            <person name="Rogers J."/>
            <person name="Rutter S."/>
            <person name="Seeger K."/>
            <person name="Skelton S."/>
            <person name="Squares S."/>
            <person name="Squares R."/>
            <person name="Sulston J.E."/>
            <person name="Taylor K."/>
            <person name="Whitehead S."/>
            <person name="Barrell B.G."/>
        </authorList>
    </citation>
    <scope>NUCLEOTIDE SEQUENCE [LARGE SCALE GENOMIC DNA]</scope>
    <source>
        <strain>ATCC 25618 / H37Rv</strain>
    </source>
</reference>
<reference key="2">
    <citation type="journal article" date="2005" name="Proc. Natl. Acad. Sci. U.S.A.">
        <title>Ancestral antibiotic resistance in Mycobacterium tuberculosis.</title>
        <authorList>
            <person name="Morris R.P."/>
            <person name="Nguyen L."/>
            <person name="Gatfield J."/>
            <person name="Visconti K."/>
            <person name="Nguyen K."/>
            <person name="Schnappinger D."/>
            <person name="Ehrt S."/>
            <person name="Liu Y."/>
            <person name="Heifets L."/>
            <person name="Pieters J."/>
            <person name="Schoolnik G."/>
            <person name="Thompson C.J."/>
        </authorList>
    </citation>
    <scope>FUNCTION</scope>
    <scope>INDUCTION</scope>
    <scope>DISRUPTION PHENOTYPE</scope>
    <source>
        <strain>1254</strain>
        <strain>ATCC 25618 / H37Rv</strain>
    </source>
</reference>
<reference key="3">
    <citation type="journal article" date="2009" name="FEBS J.">
        <title>Studies on structural and functional divergence among seven WhiB proteins of Mycobacterium tuberculosis H37Rv.</title>
        <authorList>
            <person name="Alam M.S."/>
            <person name="Garg S.K."/>
            <person name="Agrawal P."/>
        </authorList>
    </citation>
    <scope>FUNCTION AS A PROTEIN DISULFIDE REDUCTASE</scope>
    <scope>COFACTOR</scope>
    <scope>MASS SPECTROMETRY</scope>
    <scope>DISULFIDE BOND</scope>
    <source>
        <strain>ATCC 25618 / H37Rv</strain>
    </source>
</reference>
<reference key="4">
    <citation type="journal article" date="2012" name="J. Biol. Chem.">
        <title>The mycobacterial transcriptional regulator whiB7 gene links redox homeostasis and intrinsic antibiotic resistance.</title>
        <authorList>
            <person name="Burian J."/>
            <person name="Ramon-Garcia S."/>
            <person name="Sweet G."/>
            <person name="Gomez-Velasco A."/>
            <person name="Av-Gay Y."/>
            <person name="Thompson C.J."/>
        </authorList>
    </citation>
    <scope>INDUCTION</scope>
    <source>
        <strain>ATCC 25618 / H37Rv</strain>
    </source>
</reference>
<organism>
    <name type="scientific">Mycobacterium tuberculosis (strain ATCC 25618 / H37Rv)</name>
    <dbReference type="NCBI Taxonomy" id="83332"/>
    <lineage>
        <taxon>Bacteria</taxon>
        <taxon>Bacillati</taxon>
        <taxon>Actinomycetota</taxon>
        <taxon>Actinomycetes</taxon>
        <taxon>Mycobacteriales</taxon>
        <taxon>Mycobacteriaceae</taxon>
        <taxon>Mycobacterium</taxon>
        <taxon>Mycobacterium tuberculosis complex</taxon>
    </lineage>
</organism>
<dbReference type="EMBL" id="AL123456">
    <property type="protein sequence ID" value="CCP46011.1"/>
    <property type="molecule type" value="Genomic_DNA"/>
</dbReference>
<dbReference type="RefSeq" id="WP_003899963.1">
    <property type="nucleotide sequence ID" value="NZ_NVQJ01000003.1"/>
</dbReference>
<dbReference type="RefSeq" id="YP_177940.1">
    <property type="nucleotide sequence ID" value="NC_000962.3"/>
</dbReference>
<dbReference type="PDB" id="7KIF">
    <property type="method" value="EM"/>
    <property type="resolution" value="2.94 A"/>
    <property type="chains" value="Z=1-92"/>
</dbReference>
<dbReference type="PDB" id="7KIM">
    <property type="method" value="EM"/>
    <property type="resolution" value="3.38 A"/>
    <property type="chains" value="Z=1-92"/>
</dbReference>
<dbReference type="PDB" id="7KUF">
    <property type="method" value="X-ray"/>
    <property type="resolution" value="2.60 A"/>
    <property type="chains" value="A=1-92"/>
</dbReference>
<dbReference type="PDB" id="7KUG">
    <property type="method" value="X-ray"/>
    <property type="resolution" value="1.55 A"/>
    <property type="chains" value="A/C=1-79"/>
</dbReference>
<dbReference type="PDBsum" id="7KIF"/>
<dbReference type="PDBsum" id="7KIM"/>
<dbReference type="PDBsum" id="7KUF"/>
<dbReference type="PDBsum" id="7KUG"/>
<dbReference type="EMDB" id="EMD-22886"/>
<dbReference type="EMDB" id="EMD-22887"/>
<dbReference type="SMR" id="Q6MX01"/>
<dbReference type="STRING" id="83332.Rv3197A"/>
<dbReference type="PaxDb" id="83332-Rv3197A"/>
<dbReference type="DNASU" id="3205083"/>
<dbReference type="GeneID" id="3205083"/>
<dbReference type="GeneID" id="45427187"/>
<dbReference type="KEGG" id="mtu:Rv3197A"/>
<dbReference type="KEGG" id="mtv:RVBD_3197A"/>
<dbReference type="TubercuList" id="Rv3197A"/>
<dbReference type="eggNOG" id="ENOG5032RVG">
    <property type="taxonomic scope" value="Bacteria"/>
</dbReference>
<dbReference type="InParanoid" id="Q6MX01"/>
<dbReference type="OrthoDB" id="5244115at2"/>
<dbReference type="PhylomeDB" id="Q6MX01"/>
<dbReference type="Proteomes" id="UP000001584">
    <property type="component" value="Chromosome"/>
</dbReference>
<dbReference type="GO" id="GO:0005737">
    <property type="term" value="C:cytoplasm"/>
    <property type="evidence" value="ECO:0007669"/>
    <property type="project" value="UniProtKB-SubCell"/>
</dbReference>
<dbReference type="GO" id="GO:0051539">
    <property type="term" value="F:4 iron, 4 sulfur cluster binding"/>
    <property type="evidence" value="ECO:0000318"/>
    <property type="project" value="GO_Central"/>
</dbReference>
<dbReference type="GO" id="GO:0035731">
    <property type="term" value="F:dinitrosyl-iron complex binding"/>
    <property type="evidence" value="ECO:0007669"/>
    <property type="project" value="UniProtKB-UniRule"/>
</dbReference>
<dbReference type="GO" id="GO:0003677">
    <property type="term" value="F:DNA binding"/>
    <property type="evidence" value="ECO:0000318"/>
    <property type="project" value="GO_Central"/>
</dbReference>
<dbReference type="GO" id="GO:0046872">
    <property type="term" value="F:metal ion binding"/>
    <property type="evidence" value="ECO:0007669"/>
    <property type="project" value="UniProtKB-KW"/>
</dbReference>
<dbReference type="GO" id="GO:0047134">
    <property type="term" value="F:protein-disulfide reductase [NAD(P)H] activity"/>
    <property type="evidence" value="ECO:0000318"/>
    <property type="project" value="GO_Central"/>
</dbReference>
<dbReference type="GO" id="GO:0045454">
    <property type="term" value="P:cell redox homeostasis"/>
    <property type="evidence" value="ECO:0000318"/>
    <property type="project" value="GO_Central"/>
</dbReference>
<dbReference type="GO" id="GO:0045892">
    <property type="term" value="P:negative regulation of DNA-templated transcription"/>
    <property type="evidence" value="ECO:0000318"/>
    <property type="project" value="GO_Central"/>
</dbReference>
<dbReference type="GO" id="GO:0046677">
    <property type="term" value="P:response to antibiotic"/>
    <property type="evidence" value="ECO:0000315"/>
    <property type="project" value="MTBBASE"/>
</dbReference>
<dbReference type="GO" id="GO:0070542">
    <property type="term" value="P:response to fatty acid"/>
    <property type="evidence" value="ECO:0000315"/>
    <property type="project" value="MTBBASE"/>
</dbReference>
<dbReference type="HAMAP" id="MF_01479">
    <property type="entry name" value="WhiB"/>
    <property type="match status" value="1"/>
</dbReference>
<dbReference type="InterPro" id="IPR034768">
    <property type="entry name" value="4FE4S_WBL"/>
</dbReference>
<dbReference type="InterPro" id="IPR017956">
    <property type="entry name" value="AT_hook_DNA-bd_motif"/>
</dbReference>
<dbReference type="InterPro" id="IPR003482">
    <property type="entry name" value="Whib"/>
</dbReference>
<dbReference type="PANTHER" id="PTHR38839:SF2">
    <property type="entry name" value="TRANSCRIPTIONAL REGULATOR WHIB7-RELATED"/>
    <property type="match status" value="1"/>
</dbReference>
<dbReference type="PANTHER" id="PTHR38839">
    <property type="entry name" value="TRANSCRIPTIONAL REGULATOR WHID-RELATED"/>
    <property type="match status" value="1"/>
</dbReference>
<dbReference type="Pfam" id="PF02178">
    <property type="entry name" value="AT_hook"/>
    <property type="match status" value="1"/>
</dbReference>
<dbReference type="Pfam" id="PF02467">
    <property type="entry name" value="Whib"/>
    <property type="match status" value="1"/>
</dbReference>
<dbReference type="PROSITE" id="PS51674">
    <property type="entry name" value="4FE4S_WBL"/>
    <property type="match status" value="1"/>
</dbReference>
<comment type="function">
    <text evidence="1 2 3">The apo- but not holo-form probably binds DNA (By similarity). Acts as a transcriptional regulator. Probably redox-responsive. Upon overproduction at least 10 other genes are up-regulated, among them are Rv1258c, Rv1988, Rv2301, Rv2416c, Rv2725c and whiB7 itself. Probably redox-responsive. The apo-form has been shown to act as a protein disulfide reductase.</text>
</comment>
<comment type="cofactor">
    <cofactor evidence="1 5">
        <name>[4Fe-4S] cluster</name>
        <dbReference type="ChEBI" id="CHEBI:49883"/>
    </cofactor>
    <text evidence="1 5">Binds 1 [4Fe-4S] cluster per subunit. Contains 1 [2Fe-2S] cluster after reconstitution of overexpressed protein from E.coli. Following nitrosylation of the [4Fe-4S] cluster binds 1 [4Fe-8(NO)] cluster per subunit.</text>
</comment>
<comment type="subcellular location">
    <subcellularLocation>
        <location evidence="1">Cytoplasm</location>
    </subcellularLocation>
</comment>
<comment type="induction">
    <text evidence="2 4">By sublethal doses of antibiotics such as erythromycin, streptomycin and tetracycline as well as the fatty acids palmitic and oleic acid (in clinical strain 1254). By the antibiotic erythromycin. Positively regulates its own expression (in strain H37Rv).</text>
</comment>
<comment type="PTM">
    <text evidence="1">The Fe-S cluster can be nitrosylated by nitric oxide (NO).</text>
</comment>
<comment type="PTM">
    <text evidence="1">Upon Fe-S cluster removal intramolecular disulfide bonds are formed.</text>
</comment>
<comment type="mass spectrometry" mass="15697.81" method="MALDI" evidence="3">
    <text>Fully oxidized recombinant protein tagged at both termini.</text>
</comment>
<comment type="mass spectrometry" mass="15924.16" method="MALDI" evidence="3">
    <text>Fully reduced recombinant protein tagged at both termini.</text>
</comment>
<comment type="disruption phenotype">
    <text evidence="2">Decreased resistance to macrolides, a lincosamide, and an aminoglycoside antibiotic.</text>
</comment>
<comment type="similarity">
    <text evidence="5">Belongs to the WhiB family.</text>
</comment>
<evidence type="ECO:0000250" key="1"/>
<evidence type="ECO:0000269" key="2">
    <source>
    </source>
</evidence>
<evidence type="ECO:0000269" key="3">
    <source>
    </source>
</evidence>
<evidence type="ECO:0000269" key="4">
    <source>
    </source>
</evidence>
<evidence type="ECO:0000305" key="5"/>
<evidence type="ECO:0000312" key="6">
    <source>
        <dbReference type="EMBL" id="CCP46011.1"/>
    </source>
</evidence>
<evidence type="ECO:0007829" key="7">
    <source>
        <dbReference type="PDB" id="7KIF"/>
    </source>
</evidence>
<evidence type="ECO:0007829" key="8">
    <source>
        <dbReference type="PDB" id="7KIM"/>
    </source>
</evidence>
<evidence type="ECO:0007829" key="9">
    <source>
        <dbReference type="PDB" id="7KUG"/>
    </source>
</evidence>
<sequence length="92" mass="10139">MSVLTVPRQTPRQRLPVLPCHVGDPDLWFADTPAGLEVAKTLCVSCPIRRQCLAAALQRAEPWGVWGGEIFDQGSIVSHKRPRGRPRKDAVA</sequence>
<name>WHB7A_MYCTU</name>
<accession>Q6MX01</accession>
<accession>F2GK66</accession>
<accession>L0TDF5</accession>
<gene>
    <name type="primary">whiB7</name>
    <name evidence="6" type="synonym">whmC</name>
    <name evidence="6" type="ordered locus">Rv3197A</name>
</gene>
<feature type="chain" id="PRO_0000420387" description="Probable transcriptional regulator WhiB7">
    <location>
        <begin position="1"/>
        <end position="92"/>
    </location>
</feature>
<feature type="domain" description="4Fe-4S Wbl-type">
    <location>
        <begin position="19"/>
        <end position="76"/>
    </location>
</feature>
<feature type="DNA-binding region" description="A.T hook">
    <location>
        <begin position="80"/>
        <end position="91"/>
    </location>
</feature>
<feature type="binding site" evidence="1">
    <location>
        <position position="20"/>
    </location>
    <ligand>
        <name>[4Fe-4S] cluster</name>
        <dbReference type="ChEBI" id="CHEBI:49883"/>
    </ligand>
</feature>
<feature type="binding site" evidence="1">
    <location>
        <position position="43"/>
    </location>
    <ligand>
        <name>[4Fe-4S] cluster</name>
        <dbReference type="ChEBI" id="CHEBI:49883"/>
    </ligand>
</feature>
<feature type="binding site" evidence="1">
    <location>
        <position position="46"/>
    </location>
    <ligand>
        <name>[4Fe-4S] cluster</name>
        <dbReference type="ChEBI" id="CHEBI:49883"/>
    </ligand>
</feature>
<feature type="binding site" evidence="1">
    <location>
        <position position="52"/>
    </location>
    <ligand>
        <name>[4Fe-4S] cluster</name>
        <dbReference type="ChEBI" id="CHEBI:49883"/>
    </ligand>
</feature>
<feature type="turn" evidence="8">
    <location>
        <begin position="15"/>
        <end position="17"/>
    </location>
</feature>
<feature type="helix" evidence="9">
    <location>
        <begin position="19"/>
        <end position="21"/>
    </location>
</feature>
<feature type="helix" evidence="9">
    <location>
        <begin position="25"/>
        <end position="29"/>
    </location>
</feature>
<feature type="helix" evidence="9">
    <location>
        <begin position="33"/>
        <end position="43"/>
    </location>
</feature>
<feature type="helix" evidence="9">
    <location>
        <begin position="49"/>
        <end position="59"/>
    </location>
</feature>
<feature type="strand" evidence="9">
    <location>
        <begin position="63"/>
        <end position="66"/>
    </location>
</feature>
<feature type="strand" evidence="9">
    <location>
        <begin position="69"/>
        <end position="72"/>
    </location>
</feature>
<feature type="strand" evidence="7">
    <location>
        <begin position="73"/>
        <end position="75"/>
    </location>
</feature>
<keyword id="KW-0002">3D-structure</keyword>
<keyword id="KW-0004">4Fe-4S</keyword>
<keyword id="KW-0046">Antibiotic resistance</keyword>
<keyword id="KW-0963">Cytoplasm</keyword>
<keyword id="KW-1015">Disulfide bond</keyword>
<keyword id="KW-0238">DNA-binding</keyword>
<keyword id="KW-0408">Iron</keyword>
<keyword id="KW-0411">Iron-sulfur</keyword>
<keyword id="KW-0479">Metal-binding</keyword>
<keyword id="KW-1185">Reference proteome</keyword>
<keyword id="KW-0804">Transcription</keyword>
<keyword id="KW-0805">Transcription regulation</keyword>